<dbReference type="EC" id="5.4.2.11" evidence="1"/>
<dbReference type="EMBL" id="AP009510">
    <property type="protein sequence ID" value="BAG13823.1"/>
    <property type="molecule type" value="Genomic_DNA"/>
</dbReference>
<dbReference type="RefSeq" id="WP_015423350.1">
    <property type="nucleotide sequence ID" value="NC_020419.1"/>
</dbReference>
<dbReference type="SMR" id="B1GZZ1"/>
<dbReference type="STRING" id="471821.TGRD_340"/>
<dbReference type="KEGG" id="eti:RSTT_313"/>
<dbReference type="KEGG" id="rsd:TGRD_340"/>
<dbReference type="PATRIC" id="fig|471821.5.peg.555"/>
<dbReference type="HOGENOM" id="CLU_033323_1_1_0"/>
<dbReference type="OrthoDB" id="9781415at2"/>
<dbReference type="UniPathway" id="UPA00109">
    <property type="reaction ID" value="UER00186"/>
</dbReference>
<dbReference type="Proteomes" id="UP000001691">
    <property type="component" value="Chromosome"/>
</dbReference>
<dbReference type="GO" id="GO:0004619">
    <property type="term" value="F:phosphoglycerate mutase activity"/>
    <property type="evidence" value="ECO:0007669"/>
    <property type="project" value="UniProtKB-EC"/>
</dbReference>
<dbReference type="GO" id="GO:0006094">
    <property type="term" value="P:gluconeogenesis"/>
    <property type="evidence" value="ECO:0007669"/>
    <property type="project" value="UniProtKB-UniRule"/>
</dbReference>
<dbReference type="GO" id="GO:0006096">
    <property type="term" value="P:glycolytic process"/>
    <property type="evidence" value="ECO:0007669"/>
    <property type="project" value="UniProtKB-UniRule"/>
</dbReference>
<dbReference type="CDD" id="cd07067">
    <property type="entry name" value="HP_PGM_like"/>
    <property type="match status" value="1"/>
</dbReference>
<dbReference type="FunFam" id="3.40.50.1240:FF:000003">
    <property type="entry name" value="2,3-bisphosphoglycerate-dependent phosphoglycerate mutase"/>
    <property type="match status" value="1"/>
</dbReference>
<dbReference type="Gene3D" id="3.40.50.1240">
    <property type="entry name" value="Phosphoglycerate mutase-like"/>
    <property type="match status" value="1"/>
</dbReference>
<dbReference type="HAMAP" id="MF_01039">
    <property type="entry name" value="PGAM_GpmA"/>
    <property type="match status" value="1"/>
</dbReference>
<dbReference type="InterPro" id="IPR013078">
    <property type="entry name" value="His_Pase_superF_clade-1"/>
</dbReference>
<dbReference type="InterPro" id="IPR029033">
    <property type="entry name" value="His_PPase_superfam"/>
</dbReference>
<dbReference type="InterPro" id="IPR001345">
    <property type="entry name" value="PG/BPGM_mutase_AS"/>
</dbReference>
<dbReference type="InterPro" id="IPR005952">
    <property type="entry name" value="Phosphogly_mut1"/>
</dbReference>
<dbReference type="NCBIfam" id="TIGR01258">
    <property type="entry name" value="pgm_1"/>
    <property type="match status" value="1"/>
</dbReference>
<dbReference type="NCBIfam" id="NF010713">
    <property type="entry name" value="PRK14115.1"/>
    <property type="match status" value="1"/>
</dbReference>
<dbReference type="PANTHER" id="PTHR11931">
    <property type="entry name" value="PHOSPHOGLYCERATE MUTASE"/>
    <property type="match status" value="1"/>
</dbReference>
<dbReference type="Pfam" id="PF00300">
    <property type="entry name" value="His_Phos_1"/>
    <property type="match status" value="1"/>
</dbReference>
<dbReference type="PIRSF" id="PIRSF000709">
    <property type="entry name" value="6PFK_2-Ptase"/>
    <property type="match status" value="1"/>
</dbReference>
<dbReference type="SMART" id="SM00855">
    <property type="entry name" value="PGAM"/>
    <property type="match status" value="1"/>
</dbReference>
<dbReference type="SUPFAM" id="SSF53254">
    <property type="entry name" value="Phosphoglycerate mutase-like"/>
    <property type="match status" value="1"/>
</dbReference>
<dbReference type="PROSITE" id="PS00175">
    <property type="entry name" value="PG_MUTASE"/>
    <property type="match status" value="1"/>
</dbReference>
<evidence type="ECO:0000255" key="1">
    <source>
        <dbReference type="HAMAP-Rule" id="MF_01039"/>
    </source>
</evidence>
<comment type="function">
    <text evidence="1">Catalyzes the interconversion of 2-phosphoglycerate and 3-phosphoglycerate.</text>
</comment>
<comment type="catalytic activity">
    <reaction evidence="1">
        <text>(2R)-2-phosphoglycerate = (2R)-3-phosphoglycerate</text>
        <dbReference type="Rhea" id="RHEA:15901"/>
        <dbReference type="ChEBI" id="CHEBI:58272"/>
        <dbReference type="ChEBI" id="CHEBI:58289"/>
        <dbReference type="EC" id="5.4.2.11"/>
    </reaction>
</comment>
<comment type="pathway">
    <text evidence="1">Carbohydrate degradation; glycolysis; pyruvate from D-glyceraldehyde 3-phosphate: step 3/5.</text>
</comment>
<comment type="similarity">
    <text evidence="1">Belongs to the phosphoglycerate mutase family. BPG-dependent PGAM subfamily.</text>
</comment>
<name>GPMA_ENDTX</name>
<feature type="chain" id="PRO_1000135990" description="2,3-bisphosphoglycerate-dependent phosphoglycerate mutase">
    <location>
        <begin position="1"/>
        <end position="249"/>
    </location>
</feature>
<feature type="active site" description="Tele-phosphohistidine intermediate" evidence="1">
    <location>
        <position position="9"/>
    </location>
</feature>
<feature type="active site" description="Proton donor/acceptor" evidence="1">
    <location>
        <position position="87"/>
    </location>
</feature>
<feature type="binding site" evidence="1">
    <location>
        <begin position="8"/>
        <end position="15"/>
    </location>
    <ligand>
        <name>substrate</name>
    </ligand>
</feature>
<feature type="binding site" evidence="1">
    <location>
        <begin position="21"/>
        <end position="22"/>
    </location>
    <ligand>
        <name>substrate</name>
    </ligand>
</feature>
<feature type="binding site" evidence="1">
    <location>
        <position position="60"/>
    </location>
    <ligand>
        <name>substrate</name>
    </ligand>
</feature>
<feature type="binding site" evidence="1">
    <location>
        <begin position="87"/>
        <end position="90"/>
    </location>
    <ligand>
        <name>substrate</name>
    </ligand>
</feature>
<feature type="binding site" evidence="1">
    <location>
        <position position="98"/>
    </location>
    <ligand>
        <name>substrate</name>
    </ligand>
</feature>
<feature type="binding site" evidence="1">
    <location>
        <begin position="114"/>
        <end position="115"/>
    </location>
    <ligand>
        <name>substrate</name>
    </ligand>
</feature>
<feature type="binding site" evidence="1">
    <location>
        <begin position="183"/>
        <end position="184"/>
    </location>
    <ligand>
        <name>substrate</name>
    </ligand>
</feature>
<feature type="site" description="Transition state stabilizer" evidence="1">
    <location>
        <position position="182"/>
    </location>
</feature>
<accession>B1GZZ1</accession>
<sequence>MYKVVLIRHGESVWNKENKFTGWSDVDLSEKGNEEALKAGKQLKKDGFTFDLAYTSVLKRAIKTLWNVLNTMDLLWTPVVKDWRLNERHYGALQGLNKAETAAKYGEEQVKIWRRSYDIAPMALDENDERYPGKEARYSGLLKGEIPLAECLKDTVARVVPYWGKEVVPQIKAGKKIIIAAHGNSLRALVKYLDNISDSNIVNLNIPTAMPLVYELDENLKAVKNYYLGDPEAVKKAMETVASQGKVKK</sequence>
<protein>
    <recommendedName>
        <fullName evidence="1">2,3-bisphosphoglycerate-dependent phosphoglycerate mutase</fullName>
        <shortName evidence="1">BPG-dependent PGAM</shortName>
        <shortName evidence="1">PGAM</shortName>
        <shortName evidence="1">Phosphoglyceromutase</shortName>
        <shortName evidence="1">dPGM</shortName>
        <ecNumber evidence="1">5.4.2.11</ecNumber>
    </recommendedName>
</protein>
<keyword id="KW-0312">Gluconeogenesis</keyword>
<keyword id="KW-0324">Glycolysis</keyword>
<keyword id="KW-0413">Isomerase</keyword>
<organism>
    <name type="scientific">Endomicrobium trichonymphae</name>
    <dbReference type="NCBI Taxonomy" id="1408204"/>
    <lineage>
        <taxon>Bacteria</taxon>
        <taxon>Pseudomonadati</taxon>
        <taxon>Elusimicrobiota</taxon>
        <taxon>Endomicrobiia</taxon>
        <taxon>Endomicrobiales</taxon>
        <taxon>Endomicrobiaceae</taxon>
        <taxon>Candidatus Endomicrobiellum</taxon>
    </lineage>
</organism>
<proteinExistence type="inferred from homology"/>
<gene>
    <name evidence="1" type="primary">gpmA</name>
    <name type="ordered locus">TGRD_340</name>
</gene>
<reference key="1">
    <citation type="journal article" date="2008" name="Proc. Natl. Acad. Sci. U.S.A.">
        <title>Complete genome of the uncultured termite group 1 bacteria in a single host protist cell.</title>
        <authorList>
            <person name="Hongoh Y."/>
            <person name="Sharma V.K."/>
            <person name="Prakash T."/>
            <person name="Noda S."/>
            <person name="Taylor T.D."/>
            <person name="Kudo T."/>
            <person name="Sakaki Y."/>
            <person name="Toyoda A."/>
            <person name="Hattori M."/>
            <person name="Ohkuma M."/>
        </authorList>
    </citation>
    <scope>NUCLEOTIDE SEQUENCE [LARGE SCALE GENOMIC DNA]</scope>
</reference>